<evidence type="ECO:0000255" key="1">
    <source>
        <dbReference type="HAMAP-Rule" id="MF_01628"/>
    </source>
</evidence>
<comment type="function">
    <text evidence="1">The enzymes which catalyze the reversible phosphorolysis of pyrimidine nucleosides are involved in the degradation of these compounds and in their utilization as carbon and energy sources, or in the rescue of pyrimidine bases for nucleotide synthesis.</text>
</comment>
<comment type="catalytic activity">
    <reaction evidence="1">
        <text>thymidine + phosphate = 2-deoxy-alpha-D-ribose 1-phosphate + thymine</text>
        <dbReference type="Rhea" id="RHEA:16037"/>
        <dbReference type="ChEBI" id="CHEBI:17748"/>
        <dbReference type="ChEBI" id="CHEBI:17821"/>
        <dbReference type="ChEBI" id="CHEBI:43474"/>
        <dbReference type="ChEBI" id="CHEBI:57259"/>
        <dbReference type="EC" id="2.4.2.4"/>
    </reaction>
</comment>
<comment type="pathway">
    <text evidence="1">Pyrimidine metabolism; dTMP biosynthesis via salvage pathway; dTMP from thymine: step 1/2.</text>
</comment>
<comment type="subunit">
    <text evidence="1">Homodimer.</text>
</comment>
<comment type="similarity">
    <text evidence="1">Belongs to the thymidine/pyrimidine-nucleoside phosphorylase family.</text>
</comment>
<name>TYPH_YERE8</name>
<sequence>MFLAQEIIRKKRDGQALSEEEIRFFINGIRDNVVSEGQIAALAMTIYFHDMSMPERVALTMAMRDSGTVLNWKSLNLNGPMVDKHSTGGVGDVTSLMLGPMVAACGGYVPMISGRGLGHTGGTLDKLEAIPGFDIFPDDSAFRKIIQDVGVAIIGQTSSLAPADKRFYATRDITATVDSIPLITASILAKKLAEGLDALVMDVKVGSGAFMPTYQLSEDLAKAIVGVANGAGCKTTALLTDMNQVLASSAGNAVEVREAVRFLTGEYRNPRLLEVTMALCVEMLLSGGLAQNDADARAKLQAVLDNGKAAEIFGRMVAAQKGPSDFVERYDSYLPAAMLSKPVFAERSGIITAMDTRALGMAVVSLGGGRRRATDPIDYSVGLTEMARLGASVDGQQPLAVIHANNEDDWQQAADAVRAAITLGQKAAEETPVVYRRITE</sequence>
<organism>
    <name type="scientific">Yersinia enterocolitica serotype O:8 / biotype 1B (strain NCTC 13174 / 8081)</name>
    <dbReference type="NCBI Taxonomy" id="393305"/>
    <lineage>
        <taxon>Bacteria</taxon>
        <taxon>Pseudomonadati</taxon>
        <taxon>Pseudomonadota</taxon>
        <taxon>Gammaproteobacteria</taxon>
        <taxon>Enterobacterales</taxon>
        <taxon>Yersiniaceae</taxon>
        <taxon>Yersinia</taxon>
    </lineage>
</organism>
<accession>A1JJ98</accession>
<keyword id="KW-0328">Glycosyltransferase</keyword>
<keyword id="KW-0808">Transferase</keyword>
<feature type="chain" id="PRO_1000069679" description="Thymidine phosphorylase">
    <location>
        <begin position="1"/>
        <end position="440"/>
    </location>
</feature>
<protein>
    <recommendedName>
        <fullName evidence="1">Thymidine phosphorylase</fullName>
        <ecNumber evidence="1">2.4.2.4</ecNumber>
    </recommendedName>
    <alternativeName>
        <fullName evidence="1">TdRPase</fullName>
    </alternativeName>
</protein>
<gene>
    <name evidence="1" type="primary">deoA</name>
    <name type="ordered locus">YE0571</name>
</gene>
<proteinExistence type="inferred from homology"/>
<dbReference type="EC" id="2.4.2.4" evidence="1"/>
<dbReference type="EMBL" id="AM286415">
    <property type="protein sequence ID" value="CAL10688.1"/>
    <property type="molecule type" value="Genomic_DNA"/>
</dbReference>
<dbReference type="RefSeq" id="WP_011815519.1">
    <property type="nucleotide sequence ID" value="NC_008800.1"/>
</dbReference>
<dbReference type="RefSeq" id="YP_001004929.1">
    <property type="nucleotide sequence ID" value="NC_008800.1"/>
</dbReference>
<dbReference type="SMR" id="A1JJ98"/>
<dbReference type="KEGG" id="yen:YE0571"/>
<dbReference type="PATRIC" id="fig|393305.7.peg.664"/>
<dbReference type="eggNOG" id="COG0213">
    <property type="taxonomic scope" value="Bacteria"/>
</dbReference>
<dbReference type="HOGENOM" id="CLU_025040_0_1_6"/>
<dbReference type="OrthoDB" id="9763887at2"/>
<dbReference type="UniPathway" id="UPA00578">
    <property type="reaction ID" value="UER00638"/>
</dbReference>
<dbReference type="Proteomes" id="UP000000642">
    <property type="component" value="Chromosome"/>
</dbReference>
<dbReference type="GO" id="GO:0005829">
    <property type="term" value="C:cytosol"/>
    <property type="evidence" value="ECO:0007669"/>
    <property type="project" value="TreeGrafter"/>
</dbReference>
<dbReference type="GO" id="GO:0004645">
    <property type="term" value="F:1,4-alpha-oligoglucan phosphorylase activity"/>
    <property type="evidence" value="ECO:0007669"/>
    <property type="project" value="InterPro"/>
</dbReference>
<dbReference type="GO" id="GO:0009032">
    <property type="term" value="F:thymidine phosphorylase activity"/>
    <property type="evidence" value="ECO:0007669"/>
    <property type="project" value="UniProtKB-UniRule"/>
</dbReference>
<dbReference type="GO" id="GO:0006206">
    <property type="term" value="P:pyrimidine nucleobase metabolic process"/>
    <property type="evidence" value="ECO:0007669"/>
    <property type="project" value="InterPro"/>
</dbReference>
<dbReference type="GO" id="GO:0046104">
    <property type="term" value="P:thymidine metabolic process"/>
    <property type="evidence" value="ECO:0007669"/>
    <property type="project" value="UniProtKB-UniRule"/>
</dbReference>
<dbReference type="FunFam" id="3.40.1030.10:FF:000001">
    <property type="entry name" value="Thymidine phosphorylase"/>
    <property type="match status" value="1"/>
</dbReference>
<dbReference type="FunFam" id="3.90.1170.30:FF:000001">
    <property type="entry name" value="Thymidine phosphorylase"/>
    <property type="match status" value="1"/>
</dbReference>
<dbReference type="Gene3D" id="3.40.1030.10">
    <property type="entry name" value="Nucleoside phosphorylase/phosphoribosyltransferase catalytic domain"/>
    <property type="match status" value="1"/>
</dbReference>
<dbReference type="Gene3D" id="3.90.1170.30">
    <property type="entry name" value="Pyrimidine nucleoside phosphorylase-like, C-terminal domain"/>
    <property type="match status" value="1"/>
</dbReference>
<dbReference type="Gene3D" id="1.20.970.10">
    <property type="entry name" value="Transferase, Pyrimidine Nucleoside Phosphorylase, Chain C"/>
    <property type="match status" value="1"/>
</dbReference>
<dbReference type="HAMAP" id="MF_01628">
    <property type="entry name" value="Thymid_phosp"/>
    <property type="match status" value="1"/>
</dbReference>
<dbReference type="InterPro" id="IPR000312">
    <property type="entry name" value="Glycosyl_Trfase_fam3"/>
</dbReference>
<dbReference type="InterPro" id="IPR017459">
    <property type="entry name" value="Glycosyl_Trfase_fam3_N_dom"/>
</dbReference>
<dbReference type="InterPro" id="IPR036320">
    <property type="entry name" value="Glycosyl_Trfase_fam3_N_dom_sf"/>
</dbReference>
<dbReference type="InterPro" id="IPR035902">
    <property type="entry name" value="Nuc_phospho_transferase"/>
</dbReference>
<dbReference type="InterPro" id="IPR036566">
    <property type="entry name" value="PYNP-like_C_sf"/>
</dbReference>
<dbReference type="InterPro" id="IPR013102">
    <property type="entry name" value="PYNP_C"/>
</dbReference>
<dbReference type="InterPro" id="IPR018090">
    <property type="entry name" value="Pyrmidine_PPas_bac/euk"/>
</dbReference>
<dbReference type="InterPro" id="IPR017872">
    <property type="entry name" value="Pyrmidine_PPase_CS"/>
</dbReference>
<dbReference type="InterPro" id="IPR000053">
    <property type="entry name" value="Thymidine/pyrmidine_PPase"/>
</dbReference>
<dbReference type="InterPro" id="IPR013465">
    <property type="entry name" value="Thymidine_Pase"/>
</dbReference>
<dbReference type="NCBIfam" id="NF004490">
    <property type="entry name" value="PRK05820.1"/>
    <property type="match status" value="1"/>
</dbReference>
<dbReference type="NCBIfam" id="TIGR02643">
    <property type="entry name" value="T_phosphoryl"/>
    <property type="match status" value="1"/>
</dbReference>
<dbReference type="NCBIfam" id="TIGR02644">
    <property type="entry name" value="Y_phosphoryl"/>
    <property type="match status" value="1"/>
</dbReference>
<dbReference type="PANTHER" id="PTHR10515">
    <property type="entry name" value="THYMIDINE PHOSPHORYLASE"/>
    <property type="match status" value="1"/>
</dbReference>
<dbReference type="PANTHER" id="PTHR10515:SF0">
    <property type="entry name" value="THYMIDINE PHOSPHORYLASE"/>
    <property type="match status" value="1"/>
</dbReference>
<dbReference type="Pfam" id="PF02885">
    <property type="entry name" value="Glycos_trans_3N"/>
    <property type="match status" value="1"/>
</dbReference>
<dbReference type="Pfam" id="PF00591">
    <property type="entry name" value="Glycos_transf_3"/>
    <property type="match status" value="1"/>
</dbReference>
<dbReference type="Pfam" id="PF07831">
    <property type="entry name" value="PYNP_C"/>
    <property type="match status" value="1"/>
</dbReference>
<dbReference type="PIRSF" id="PIRSF000478">
    <property type="entry name" value="TP_PyNP"/>
    <property type="match status" value="1"/>
</dbReference>
<dbReference type="SMART" id="SM00941">
    <property type="entry name" value="PYNP_C"/>
    <property type="match status" value="1"/>
</dbReference>
<dbReference type="SUPFAM" id="SSF52418">
    <property type="entry name" value="Nucleoside phosphorylase/phosphoribosyltransferase catalytic domain"/>
    <property type="match status" value="1"/>
</dbReference>
<dbReference type="SUPFAM" id="SSF47648">
    <property type="entry name" value="Nucleoside phosphorylase/phosphoribosyltransferase N-terminal domain"/>
    <property type="match status" value="1"/>
</dbReference>
<dbReference type="SUPFAM" id="SSF54680">
    <property type="entry name" value="Pyrimidine nucleoside phosphorylase C-terminal domain"/>
    <property type="match status" value="1"/>
</dbReference>
<dbReference type="PROSITE" id="PS00647">
    <property type="entry name" value="THYMID_PHOSPHORYLASE"/>
    <property type="match status" value="1"/>
</dbReference>
<reference key="1">
    <citation type="journal article" date="2006" name="PLoS Genet.">
        <title>The complete genome sequence and comparative genome analysis of the high pathogenicity Yersinia enterocolitica strain 8081.</title>
        <authorList>
            <person name="Thomson N.R."/>
            <person name="Howard S."/>
            <person name="Wren B.W."/>
            <person name="Holden M.T.G."/>
            <person name="Crossman L."/>
            <person name="Challis G.L."/>
            <person name="Churcher C."/>
            <person name="Mungall K."/>
            <person name="Brooks K."/>
            <person name="Chillingworth T."/>
            <person name="Feltwell T."/>
            <person name="Abdellah Z."/>
            <person name="Hauser H."/>
            <person name="Jagels K."/>
            <person name="Maddison M."/>
            <person name="Moule S."/>
            <person name="Sanders M."/>
            <person name="Whitehead S."/>
            <person name="Quail M.A."/>
            <person name="Dougan G."/>
            <person name="Parkhill J."/>
            <person name="Prentice M.B."/>
        </authorList>
    </citation>
    <scope>NUCLEOTIDE SEQUENCE [LARGE SCALE GENOMIC DNA]</scope>
    <source>
        <strain>NCTC 13174 / 8081</strain>
    </source>
</reference>